<keyword id="KW-0186">Copper</keyword>
<keyword id="KW-0479">Metal-binding</keyword>
<keyword id="KW-0480">Metal-thiolate cluster</keyword>
<sequence length="27" mass="2549">MAPCSCKSCGTSCAGSCTSCSCGSCSH</sequence>
<organism>
    <name type="scientific">Colletotrichum gloeosporioides</name>
    <name type="common">Anthracnose fungus</name>
    <name type="synonym">Glomerella cingulata</name>
    <dbReference type="NCBI Taxonomy" id="474922"/>
    <lineage>
        <taxon>Eukaryota</taxon>
        <taxon>Fungi</taxon>
        <taxon>Dikarya</taxon>
        <taxon>Ascomycota</taxon>
        <taxon>Pezizomycotina</taxon>
        <taxon>Sordariomycetes</taxon>
        <taxon>Hypocreomycetidae</taxon>
        <taxon>Glomerellales</taxon>
        <taxon>Glomerellaceae</taxon>
        <taxon>Colletotrichum</taxon>
        <taxon>Colletotrichum gloeosporioides species complex</taxon>
    </lineage>
</organism>
<feature type="peptide" id="PRO_0000197363" description="Metallothionein-like protein CAP5">
    <location>
        <begin position="1"/>
        <end position="27"/>
    </location>
</feature>
<feature type="region of interest" description="Disordered" evidence="2">
    <location>
        <begin position="1"/>
        <end position="27"/>
    </location>
</feature>
<feature type="compositionally biased region" description="Low complexity" evidence="2">
    <location>
        <begin position="1"/>
        <end position="18"/>
    </location>
</feature>
<feature type="binding site" evidence="1">
    <location>
        <position position="4"/>
    </location>
    <ligand>
        <name>Cu(+)</name>
        <dbReference type="ChEBI" id="CHEBI:49552"/>
        <label>1</label>
    </ligand>
</feature>
<feature type="binding site" evidence="1">
    <location>
        <position position="6"/>
    </location>
    <ligand>
        <name>Cu(+)</name>
        <dbReference type="ChEBI" id="CHEBI:49552"/>
        <label>2</label>
    </ligand>
</feature>
<feature type="binding site" evidence="1">
    <location>
        <position position="6"/>
    </location>
    <ligand>
        <name>Cu(+)</name>
        <dbReference type="ChEBI" id="CHEBI:49552"/>
        <label>3</label>
    </ligand>
</feature>
<feature type="binding site" evidence="1">
    <location>
        <position position="9"/>
    </location>
    <ligand>
        <name>Cu(+)</name>
        <dbReference type="ChEBI" id="CHEBI:49552"/>
        <label>4</label>
    </ligand>
</feature>
<feature type="binding site" evidence="1">
    <location>
        <position position="9"/>
    </location>
    <ligand>
        <name>Cu(+)</name>
        <dbReference type="ChEBI" id="CHEBI:49552"/>
        <label>5</label>
    </ligand>
</feature>
<feature type="binding site" evidence="1">
    <location>
        <position position="13"/>
    </location>
    <ligand>
        <name>Cu(+)</name>
        <dbReference type="ChEBI" id="CHEBI:49552"/>
        <label>6</label>
    </ligand>
</feature>
<feature type="binding site" evidence="1">
    <location>
        <position position="20"/>
    </location>
    <ligand>
        <name>Cu(+)</name>
        <dbReference type="ChEBI" id="CHEBI:49552"/>
        <label>5</label>
    </ligand>
</feature>
<feature type="binding site" evidence="1">
    <location>
        <position position="20"/>
    </location>
    <ligand>
        <name>Cu(+)</name>
        <dbReference type="ChEBI" id="CHEBI:49552"/>
        <label>6</label>
    </ligand>
</feature>
<feature type="binding site" evidence="1">
    <location>
        <position position="22"/>
    </location>
    <ligand>
        <name>Cu(+)</name>
        <dbReference type="ChEBI" id="CHEBI:49552"/>
        <label>3</label>
    </ligand>
</feature>
<feature type="binding site" evidence="1">
    <location>
        <position position="22"/>
    </location>
    <ligand>
        <name>Cu(+)</name>
        <dbReference type="ChEBI" id="CHEBI:49552"/>
        <label>4</label>
    </ligand>
</feature>
<feature type="binding site" evidence="1">
    <location>
        <position position="25"/>
    </location>
    <ligand>
        <name>Cu(+)</name>
        <dbReference type="ChEBI" id="CHEBI:49552"/>
        <label>1</label>
    </ligand>
</feature>
<feature type="binding site" evidence="1">
    <location>
        <position position="25"/>
    </location>
    <ligand>
        <name>Cu(+)</name>
        <dbReference type="ChEBI" id="CHEBI:49552"/>
        <label>2</label>
    </ligand>
</feature>
<dbReference type="EMBL" id="U18757">
    <property type="protein sequence ID" value="AAA77680.1"/>
    <property type="molecule type" value="Genomic_DNA"/>
</dbReference>
<dbReference type="PIR" id="S55030">
    <property type="entry name" value="S55030"/>
</dbReference>
<dbReference type="GO" id="GO:0046872">
    <property type="term" value="F:metal ion binding"/>
    <property type="evidence" value="ECO:0007669"/>
    <property type="project" value="UniProtKB-KW"/>
</dbReference>
<name>MT2_COLGL</name>
<evidence type="ECO:0000250" key="1">
    <source>
        <dbReference type="UniProtKB" id="P02807"/>
    </source>
</evidence>
<evidence type="ECO:0000256" key="2">
    <source>
        <dbReference type="SAM" id="MobiDB-lite"/>
    </source>
</evidence>
<evidence type="ECO:0000305" key="3"/>
<accession>Q00369</accession>
<comment type="developmental stage">
    <text>Expressed in the conidium only during the process of appressorium formation induced by avocado surface wax.</text>
</comment>
<comment type="similarity">
    <text evidence="3">Belongs to the metallothionein superfamily. Type 8 family.</text>
</comment>
<reference key="1">
    <citation type="journal article" date="1995" name="Mol. Gen. Genet.">
        <title>Isolation and characterization of genes expressed uniquely during appressorium formation by Colletotrichum gloeosporioides conidia induced by the host surface wax.</title>
        <authorList>
            <person name="Hwang C.-S."/>
            <person name="Kolattukudy P.E."/>
        </authorList>
    </citation>
    <scope>NUCLEOTIDE SEQUENCE [GENOMIC DNA]</scope>
    <source>
        <tissue>Conidium</tissue>
    </source>
</reference>
<protein>
    <recommendedName>
        <fullName>Metallothionein-like protein CAP5</fullName>
    </recommendedName>
</protein>
<proteinExistence type="evidence at transcript level"/>
<gene>
    <name type="primary">CAP5</name>
</gene>